<accession>Q5PIU5</accession>
<dbReference type="EMBL" id="CP000026">
    <property type="protein sequence ID" value="AAV79110.1"/>
    <property type="molecule type" value="Genomic_DNA"/>
</dbReference>
<dbReference type="RefSeq" id="WP_001096206.1">
    <property type="nucleotide sequence ID" value="NC_006511.1"/>
</dbReference>
<dbReference type="SMR" id="Q5PIU5"/>
<dbReference type="GeneID" id="93751944"/>
<dbReference type="KEGG" id="spt:SPA3294"/>
<dbReference type="HOGENOM" id="CLU_061015_2_1_6"/>
<dbReference type="Proteomes" id="UP000008185">
    <property type="component" value="Chromosome"/>
</dbReference>
<dbReference type="GO" id="GO:1990904">
    <property type="term" value="C:ribonucleoprotein complex"/>
    <property type="evidence" value="ECO:0007669"/>
    <property type="project" value="UniProtKB-KW"/>
</dbReference>
<dbReference type="GO" id="GO:0005840">
    <property type="term" value="C:ribosome"/>
    <property type="evidence" value="ECO:0007669"/>
    <property type="project" value="UniProtKB-KW"/>
</dbReference>
<dbReference type="GO" id="GO:0019843">
    <property type="term" value="F:rRNA binding"/>
    <property type="evidence" value="ECO:0007669"/>
    <property type="project" value="UniProtKB-UniRule"/>
</dbReference>
<dbReference type="GO" id="GO:0003735">
    <property type="term" value="F:structural constituent of ribosome"/>
    <property type="evidence" value="ECO:0007669"/>
    <property type="project" value="InterPro"/>
</dbReference>
<dbReference type="GO" id="GO:0000049">
    <property type="term" value="F:tRNA binding"/>
    <property type="evidence" value="ECO:0007669"/>
    <property type="project" value="UniProtKB-UniRule"/>
</dbReference>
<dbReference type="GO" id="GO:0006412">
    <property type="term" value="P:translation"/>
    <property type="evidence" value="ECO:0007669"/>
    <property type="project" value="UniProtKB-UniRule"/>
</dbReference>
<dbReference type="FunFam" id="3.30.1440.10:FF:000001">
    <property type="entry name" value="50S ribosomal protein L5"/>
    <property type="match status" value="1"/>
</dbReference>
<dbReference type="Gene3D" id="3.30.1440.10">
    <property type="match status" value="1"/>
</dbReference>
<dbReference type="HAMAP" id="MF_01333_B">
    <property type="entry name" value="Ribosomal_uL5_B"/>
    <property type="match status" value="1"/>
</dbReference>
<dbReference type="InterPro" id="IPR002132">
    <property type="entry name" value="Ribosomal_uL5"/>
</dbReference>
<dbReference type="InterPro" id="IPR020930">
    <property type="entry name" value="Ribosomal_uL5_bac-type"/>
</dbReference>
<dbReference type="InterPro" id="IPR031309">
    <property type="entry name" value="Ribosomal_uL5_C"/>
</dbReference>
<dbReference type="InterPro" id="IPR020929">
    <property type="entry name" value="Ribosomal_uL5_CS"/>
</dbReference>
<dbReference type="InterPro" id="IPR022803">
    <property type="entry name" value="Ribosomal_uL5_dom_sf"/>
</dbReference>
<dbReference type="InterPro" id="IPR031310">
    <property type="entry name" value="Ribosomal_uL5_N"/>
</dbReference>
<dbReference type="NCBIfam" id="NF000585">
    <property type="entry name" value="PRK00010.1"/>
    <property type="match status" value="1"/>
</dbReference>
<dbReference type="PANTHER" id="PTHR11994">
    <property type="entry name" value="60S RIBOSOMAL PROTEIN L11-RELATED"/>
    <property type="match status" value="1"/>
</dbReference>
<dbReference type="Pfam" id="PF00281">
    <property type="entry name" value="Ribosomal_L5"/>
    <property type="match status" value="1"/>
</dbReference>
<dbReference type="Pfam" id="PF00673">
    <property type="entry name" value="Ribosomal_L5_C"/>
    <property type="match status" value="1"/>
</dbReference>
<dbReference type="PIRSF" id="PIRSF002161">
    <property type="entry name" value="Ribosomal_L5"/>
    <property type="match status" value="1"/>
</dbReference>
<dbReference type="SUPFAM" id="SSF55282">
    <property type="entry name" value="RL5-like"/>
    <property type="match status" value="1"/>
</dbReference>
<dbReference type="PROSITE" id="PS00358">
    <property type="entry name" value="RIBOSOMAL_L5"/>
    <property type="match status" value="1"/>
</dbReference>
<gene>
    <name evidence="1" type="primary">rplE</name>
    <name type="ordered locus">SPA3294</name>
</gene>
<name>RL5_SALPA</name>
<sequence length="179" mass="20318">MAKLHDYYKDEVVNKLMTEFNYNSVMQVPRVEKITLNMGVGEAIADKKLLDNAAADLTAISGQKPLITKARKSVAGFKIRQGYPIGCKVTLRGERMWEFFERLITIAVPRIRDFRGLSAKSFDGRGNYSMGVREQIIFPEIDYDKVDRVRGLDITITTTAKSDEEGRALLAAFDFPFRK</sequence>
<keyword id="KW-0687">Ribonucleoprotein</keyword>
<keyword id="KW-0689">Ribosomal protein</keyword>
<keyword id="KW-0694">RNA-binding</keyword>
<keyword id="KW-0699">rRNA-binding</keyword>
<keyword id="KW-0820">tRNA-binding</keyword>
<feature type="chain" id="PRO_0000243061" description="Large ribosomal subunit protein uL5">
    <location>
        <begin position="1"/>
        <end position="179"/>
    </location>
</feature>
<organism>
    <name type="scientific">Salmonella paratyphi A (strain ATCC 9150 / SARB42)</name>
    <dbReference type="NCBI Taxonomy" id="295319"/>
    <lineage>
        <taxon>Bacteria</taxon>
        <taxon>Pseudomonadati</taxon>
        <taxon>Pseudomonadota</taxon>
        <taxon>Gammaproteobacteria</taxon>
        <taxon>Enterobacterales</taxon>
        <taxon>Enterobacteriaceae</taxon>
        <taxon>Salmonella</taxon>
    </lineage>
</organism>
<protein>
    <recommendedName>
        <fullName evidence="1">Large ribosomal subunit protein uL5</fullName>
    </recommendedName>
    <alternativeName>
        <fullName evidence="2">50S ribosomal protein L5</fullName>
    </alternativeName>
</protein>
<proteinExistence type="inferred from homology"/>
<evidence type="ECO:0000255" key="1">
    <source>
        <dbReference type="HAMAP-Rule" id="MF_01333"/>
    </source>
</evidence>
<evidence type="ECO:0000305" key="2"/>
<reference key="1">
    <citation type="journal article" date="2004" name="Nat. Genet.">
        <title>Comparison of genome degradation in Paratyphi A and Typhi, human-restricted serovars of Salmonella enterica that cause typhoid.</title>
        <authorList>
            <person name="McClelland M."/>
            <person name="Sanderson K.E."/>
            <person name="Clifton S.W."/>
            <person name="Latreille P."/>
            <person name="Porwollik S."/>
            <person name="Sabo A."/>
            <person name="Meyer R."/>
            <person name="Bieri T."/>
            <person name="Ozersky P."/>
            <person name="McLellan M."/>
            <person name="Harkins C.R."/>
            <person name="Wang C."/>
            <person name="Nguyen C."/>
            <person name="Berghoff A."/>
            <person name="Elliott G."/>
            <person name="Kohlberg S."/>
            <person name="Strong C."/>
            <person name="Du F."/>
            <person name="Carter J."/>
            <person name="Kremizki C."/>
            <person name="Layman D."/>
            <person name="Leonard S."/>
            <person name="Sun H."/>
            <person name="Fulton L."/>
            <person name="Nash W."/>
            <person name="Miner T."/>
            <person name="Minx P."/>
            <person name="Delehaunty K."/>
            <person name="Fronick C."/>
            <person name="Magrini V."/>
            <person name="Nhan M."/>
            <person name="Warren W."/>
            <person name="Florea L."/>
            <person name="Spieth J."/>
            <person name="Wilson R.K."/>
        </authorList>
    </citation>
    <scope>NUCLEOTIDE SEQUENCE [LARGE SCALE GENOMIC DNA]</scope>
    <source>
        <strain>ATCC 9150 / SARB42</strain>
    </source>
</reference>
<comment type="function">
    <text evidence="1">This is one of the proteins that bind and probably mediate the attachment of the 5S RNA into the large ribosomal subunit, where it forms part of the central protuberance. In the 70S ribosome it contacts protein S13 of the 30S subunit (bridge B1b), connecting the 2 subunits; this bridge is implicated in subunit movement. Contacts the P site tRNA; the 5S rRNA and some of its associated proteins might help stabilize positioning of ribosome-bound tRNAs.</text>
</comment>
<comment type="subunit">
    <text evidence="1">Part of the 50S ribosomal subunit; part of the 5S rRNA/L5/L18/L25 subcomplex. Contacts the 5S rRNA and the P site tRNA. Forms a bridge to the 30S subunit in the 70S ribosome.</text>
</comment>
<comment type="similarity">
    <text evidence="1">Belongs to the universal ribosomal protein uL5 family.</text>
</comment>